<gene>
    <name evidence="3" type="primary">FUT1</name>
</gene>
<name>FUT1_PLEBR</name>
<comment type="function">
    <text evidence="2 3">Catalyzes the transfer of L-fucose, from a guanosine diphosphate-beta-L-fucose, to the terminal galactose residue of glycoconjugates through an alpha(1,2) linkage leading to H antigen synthesis that is an intermediate substrate in the synthesis of ABO blood group antigens. H antigen is essential for maturation of the glomerular layer of the main olfactory bulb, in cell migration and early cell-cell contacts during tumor associated angiogenesis (By similarity). Preferentially fucosylates soluble lactose and to a lesser extent fucosylates glycolipids gangliosides GA1 and GM1a (By similarity).</text>
</comment>
<comment type="catalytic activity">
    <reaction evidence="3">
        <text>a beta-D-galactosyl-(1-&gt;4)-N-acetyl-beta-D-glucosaminyl derivative + GDP-beta-L-fucose = an alpha-L-Fuc-(1-&gt;2)-beta-D-Gal-(1-&gt;4)-beta-D-GlcNAc derivative + GDP + H(+)</text>
        <dbReference type="Rhea" id="RHEA:50668"/>
        <dbReference type="ChEBI" id="CHEBI:15378"/>
        <dbReference type="ChEBI" id="CHEBI:57273"/>
        <dbReference type="ChEBI" id="CHEBI:58189"/>
        <dbReference type="ChEBI" id="CHEBI:133507"/>
        <dbReference type="ChEBI" id="CHEBI:133510"/>
        <dbReference type="EC" id="2.4.1.344"/>
    </reaction>
</comment>
<comment type="catalytic activity">
    <reaction evidence="2">
        <text>a ganglioside GA1 + GDP-beta-L-fucose = a ganglioside Fuc-GA1 + GDP + H(+)</text>
        <dbReference type="Rhea" id="RHEA:48320"/>
        <dbReference type="ChEBI" id="CHEBI:15378"/>
        <dbReference type="ChEBI" id="CHEBI:57273"/>
        <dbReference type="ChEBI" id="CHEBI:58189"/>
        <dbReference type="ChEBI" id="CHEBI:88069"/>
        <dbReference type="ChEBI" id="CHEBI:90262"/>
    </reaction>
    <physiologicalReaction direction="left-to-right" evidence="2">
        <dbReference type="Rhea" id="RHEA:48321"/>
    </physiologicalReaction>
</comment>
<comment type="catalytic activity">
    <reaction evidence="2">
        <text>a beta-D-Gal-(1-&gt;3)-beta-D-GlcNAc-(1-&gt;3)-beta-D-Gal-(1-&gt;4)-beta-D-Glc-(1&lt;-&gt;1')-Cer(d18:1(4E)) + GDP-beta-L-fucose = alpha-L-fucosyl-(1-&gt;2)- beta-D-galactosyl-(1-&gt;3)-N-acetyl-beta-D-glucosaminyl-(1-&gt;3)-beta-D-galactosyl-(1-&gt;4)-beta-D-glucosyl-(1&lt;-&gt;1')-N-acylsphing-4-enine + GDP + H(+)</text>
        <dbReference type="Rhea" id="RHEA:32175"/>
        <dbReference type="ChEBI" id="CHEBI:15378"/>
        <dbReference type="ChEBI" id="CHEBI:17292"/>
        <dbReference type="ChEBI" id="CHEBI:28743"/>
        <dbReference type="ChEBI" id="CHEBI:57273"/>
        <dbReference type="ChEBI" id="CHEBI:58189"/>
        <dbReference type="EC" id="2.4.1.69"/>
    </reaction>
    <physiologicalReaction direction="left-to-right" evidence="2">
        <dbReference type="Rhea" id="RHEA:32176"/>
    </physiologicalReaction>
</comment>
<comment type="catalytic activity">
    <reaction evidence="2">
        <text>a neolactoside nLc4Cer(d18:1(4E)) + GDP-beta-L-fucose = a neolactoside IV(2)-alpha-Fuc-nLc4Cer(d18:1(4E)) + GDP + H(+)</text>
        <dbReference type="Rhea" id="RHEA:48304"/>
        <dbReference type="ChEBI" id="CHEBI:15378"/>
        <dbReference type="ChEBI" id="CHEBI:17006"/>
        <dbReference type="ChEBI" id="CHEBI:28691"/>
        <dbReference type="ChEBI" id="CHEBI:57273"/>
        <dbReference type="ChEBI" id="CHEBI:58189"/>
    </reaction>
    <physiologicalReaction direction="left-to-right" evidence="2">
        <dbReference type="Rhea" id="RHEA:48305"/>
    </physiologicalReaction>
</comment>
<comment type="catalytic activity">
    <reaction evidence="1">
        <text>a ganglioside GM1 + GDP-beta-L-fucose = a ganglioside Fuc-GM1 + GDP + H(+)</text>
        <dbReference type="Rhea" id="RHEA:48292"/>
        <dbReference type="ChEBI" id="CHEBI:15378"/>
        <dbReference type="ChEBI" id="CHEBI:57273"/>
        <dbReference type="ChEBI" id="CHEBI:58189"/>
        <dbReference type="ChEBI" id="CHEBI:82639"/>
        <dbReference type="ChEBI" id="CHEBI:90189"/>
    </reaction>
    <physiologicalReaction direction="left-to-right" evidence="1">
        <dbReference type="Rhea" id="RHEA:48293"/>
    </physiologicalReaction>
</comment>
<comment type="catalytic activity">
    <reaction evidence="1">
        <text>beta-D-galactosyl-(1-&gt;3)-N-acetyl-D-galactosamine + GDP-beta-L-fucose = alpha-L-fucosyl-(1-&gt;2)-beta-D-galactosyl-(1-&gt;3)-N-acetyl-D-galactosamine + GDP + H(+)</text>
        <dbReference type="Rhea" id="RHEA:62964"/>
        <dbReference type="ChEBI" id="CHEBI:15378"/>
        <dbReference type="ChEBI" id="CHEBI:57273"/>
        <dbReference type="ChEBI" id="CHEBI:58189"/>
        <dbReference type="ChEBI" id="CHEBI:84728"/>
        <dbReference type="ChEBI" id="CHEBI:546807"/>
    </reaction>
    <physiologicalReaction direction="left-to-right" evidence="1">
        <dbReference type="Rhea" id="RHEA:62965"/>
    </physiologicalReaction>
</comment>
<comment type="pathway">
    <text evidence="3">Protein modification; protein glycosylation.</text>
</comment>
<comment type="subcellular location">
    <subcellularLocation>
        <location evidence="2">Golgi apparatus</location>
        <location evidence="2">Golgi stack membrane</location>
        <topology evidence="2">Single-pass type II membrane protein</topology>
    </subcellularLocation>
    <text evidence="2">Membrane-bound form in trans cisternae of Golgi.</text>
</comment>
<comment type="similarity">
    <text evidence="5">Belongs to the glycosyltransferase 11 family.</text>
</comment>
<keyword id="KW-0325">Glycoprotein</keyword>
<keyword id="KW-0328">Glycosyltransferase</keyword>
<keyword id="KW-0333">Golgi apparatus</keyword>
<keyword id="KW-0443">Lipid metabolism</keyword>
<keyword id="KW-0472">Membrane</keyword>
<keyword id="KW-0735">Signal-anchor</keyword>
<keyword id="KW-0808">Transferase</keyword>
<keyword id="KW-0812">Transmembrane</keyword>
<keyword id="KW-1133">Transmembrane helix</keyword>
<dbReference type="EC" id="2.4.1.69" evidence="2"/>
<dbReference type="EC" id="2.4.1.344" evidence="3"/>
<dbReference type="EMBL" id="AY219643">
    <property type="protein sequence ID" value="AAO43085.1"/>
    <property type="molecule type" value="Genomic_DNA"/>
</dbReference>
<dbReference type="SMR" id="Q866C5"/>
<dbReference type="CAZy" id="GT11">
    <property type="family name" value="Glycosyltransferase Family 11"/>
</dbReference>
<dbReference type="GlyCosmos" id="Q866C5">
    <property type="glycosylation" value="3 sites, No reported glycans"/>
</dbReference>
<dbReference type="UniPathway" id="UPA00378"/>
<dbReference type="GO" id="GO:0032580">
    <property type="term" value="C:Golgi cisterna membrane"/>
    <property type="evidence" value="ECO:0007669"/>
    <property type="project" value="UniProtKB-SubCell"/>
</dbReference>
<dbReference type="GO" id="GO:0031127">
    <property type="term" value="F:alpha-(1,2)-fucosyltransferase activity"/>
    <property type="evidence" value="ECO:0000250"/>
    <property type="project" value="UniProtKB"/>
</dbReference>
<dbReference type="GO" id="GO:0008107">
    <property type="term" value="F:galactoside 2-alpha-L-fucosyltransferase activity"/>
    <property type="evidence" value="ECO:0007669"/>
    <property type="project" value="UniProtKB-EC"/>
</dbReference>
<dbReference type="GO" id="GO:0005975">
    <property type="term" value="P:carbohydrate metabolic process"/>
    <property type="evidence" value="ECO:0007669"/>
    <property type="project" value="InterPro"/>
</dbReference>
<dbReference type="GO" id="GO:0036065">
    <property type="term" value="P:fucosylation"/>
    <property type="evidence" value="ECO:0000250"/>
    <property type="project" value="UniProtKB"/>
</dbReference>
<dbReference type="GO" id="GO:0006629">
    <property type="term" value="P:lipid metabolic process"/>
    <property type="evidence" value="ECO:0007669"/>
    <property type="project" value="UniProtKB-KW"/>
</dbReference>
<dbReference type="GO" id="GO:0021772">
    <property type="term" value="P:olfactory bulb development"/>
    <property type="evidence" value="ECO:0000250"/>
    <property type="project" value="UniProtKB"/>
</dbReference>
<dbReference type="GO" id="GO:0001954">
    <property type="term" value="P:positive regulation of cell-matrix adhesion"/>
    <property type="evidence" value="ECO:0000250"/>
    <property type="project" value="UniProtKB"/>
</dbReference>
<dbReference type="GO" id="GO:0010595">
    <property type="term" value="P:positive regulation of endothelial cell migration"/>
    <property type="evidence" value="ECO:0000250"/>
    <property type="project" value="UniProtKB"/>
</dbReference>
<dbReference type="GO" id="GO:1904906">
    <property type="term" value="P:positive regulation of endothelial cell-matrix adhesion via fibronectin"/>
    <property type="evidence" value="ECO:0000250"/>
    <property type="project" value="UniProtKB"/>
</dbReference>
<dbReference type="GO" id="GO:1903672">
    <property type="term" value="P:positive regulation of sprouting angiogenesis"/>
    <property type="evidence" value="ECO:0000250"/>
    <property type="project" value="UniProtKB"/>
</dbReference>
<dbReference type="GO" id="GO:0006486">
    <property type="term" value="P:protein glycosylation"/>
    <property type="evidence" value="ECO:0000250"/>
    <property type="project" value="UniProtKB"/>
</dbReference>
<dbReference type="GO" id="GO:0030155">
    <property type="term" value="P:regulation of cell adhesion"/>
    <property type="evidence" value="ECO:0000250"/>
    <property type="project" value="UniProtKB"/>
</dbReference>
<dbReference type="GO" id="GO:0001936">
    <property type="term" value="P:regulation of endothelial cell proliferation"/>
    <property type="evidence" value="ECO:0000250"/>
    <property type="project" value="UniProtKB"/>
</dbReference>
<dbReference type="CDD" id="cd11301">
    <property type="entry name" value="Fut1_Fut2_like"/>
    <property type="match status" value="1"/>
</dbReference>
<dbReference type="InterPro" id="IPR002516">
    <property type="entry name" value="Glyco_trans_11"/>
</dbReference>
<dbReference type="PANTHER" id="PTHR11927">
    <property type="entry name" value="GALACTOSIDE 2-L-FUCOSYLTRANSFERASE"/>
    <property type="match status" value="1"/>
</dbReference>
<dbReference type="PANTHER" id="PTHR11927:SF4">
    <property type="entry name" value="GALACTOSIDE ALPHA-(1,2)-FUCOSYLTRANSFERASE 1"/>
    <property type="match status" value="1"/>
</dbReference>
<dbReference type="Pfam" id="PF01531">
    <property type="entry name" value="Glyco_transf_11"/>
    <property type="match status" value="1"/>
</dbReference>
<reference key="1">
    <citation type="submission" date="2003-01" db="EMBL/GenBank/DDBJ databases">
        <title>Molecular evolution of the H (FUT1) gene in New World monkeys (Primates, Platyrrhini): evidence of divergent evolution and purifying selection.</title>
        <authorList>
            <person name="Borges B.N."/>
            <person name="Harada M.L."/>
        </authorList>
    </citation>
    <scope>NUCLEOTIDE SEQUENCE [GENOMIC DNA]</scope>
</reference>
<evidence type="ECO:0000250" key="1">
    <source>
        <dbReference type="UniProtKB" id="F6Q1T7"/>
    </source>
</evidence>
<evidence type="ECO:0000250" key="2">
    <source>
        <dbReference type="UniProtKB" id="O09160"/>
    </source>
</evidence>
<evidence type="ECO:0000250" key="3">
    <source>
        <dbReference type="UniProtKB" id="P19526"/>
    </source>
</evidence>
<evidence type="ECO:0000255" key="4"/>
<evidence type="ECO:0000305" key="5"/>
<organism>
    <name type="scientific">Plecturocebus brunneus</name>
    <name type="common">Brown titi monkey</name>
    <name type="synonym">Callicebus brunneus</name>
    <dbReference type="NCBI Taxonomy" id="1812042"/>
    <lineage>
        <taxon>Eukaryota</taxon>
        <taxon>Metazoa</taxon>
        <taxon>Chordata</taxon>
        <taxon>Craniata</taxon>
        <taxon>Vertebrata</taxon>
        <taxon>Euteleostomi</taxon>
        <taxon>Mammalia</taxon>
        <taxon>Eutheria</taxon>
        <taxon>Euarchontoglires</taxon>
        <taxon>Primates</taxon>
        <taxon>Haplorrhini</taxon>
        <taxon>Platyrrhini</taxon>
        <taxon>Pitheciidae</taxon>
        <taxon>Callicebinae</taxon>
        <taxon>Plecturocebus</taxon>
    </lineage>
</organism>
<sequence length="366" mass="41340">MWPLSHRHLCLAFLLVCVLSAISFFLHIHQDSFRHGLSLSVLCPDRHLVTPPVAIFCLPGSPMSPNASSPRPQHPASLSGTWTIYPDGRFGNQMGQYATLLALAQLNGRRAFILPSMHAALAPVFRITLPVLAPEVDSRTPWRELRLHDWMSEEYADLGDPFLKLSGFPCSWTFFHHLREQIRSEFTLHDHLRQEAQSVLGRLRLGRSGDRPRTFVGVHVRRGDYLQVMPQRWKGVVGNSAYLRQAMDWFRARHEAPVFVVTSNGMEWCRENIDASKGDVMFAGDGQEASPWKDFALLTQCNHTIMTIGTFGFWAAYLAGGDTVYLANFTLPDSEFLKIFKPEAAFLPEWVGINADLSPLWTLAEP</sequence>
<proteinExistence type="inferred from homology"/>
<feature type="chain" id="PRO_0000149091" description="Galactoside alpha-(1,2)-fucosyltransferase 1">
    <location>
        <begin position="1"/>
        <end position="366"/>
    </location>
</feature>
<feature type="topological domain" description="Cytoplasmic" evidence="4">
    <location>
        <begin position="1"/>
        <end position="8"/>
    </location>
</feature>
<feature type="transmembrane region" description="Helical; Signal-anchor for type II membrane protein" evidence="4">
    <location>
        <begin position="9"/>
        <end position="25"/>
    </location>
</feature>
<feature type="topological domain" description="Lumenal" evidence="4">
    <location>
        <begin position="26"/>
        <end position="366"/>
    </location>
</feature>
<feature type="glycosylation site" description="N-linked (GlcNAc...) asparagine" evidence="4">
    <location>
        <position position="66"/>
    </location>
</feature>
<feature type="glycosylation site" description="N-linked (GlcNAc...) asparagine" evidence="4">
    <location>
        <position position="302"/>
    </location>
</feature>
<feature type="glycosylation site" description="N-linked (GlcNAc...) asparagine" evidence="4">
    <location>
        <position position="328"/>
    </location>
</feature>
<protein>
    <recommendedName>
        <fullName evidence="3">Galactoside alpha-(1,2)-fucosyltransferase 1</fullName>
    </recommendedName>
    <alternativeName>
        <fullName>Alpha(1,2)FT 1</fullName>
    </alternativeName>
    <alternativeName>
        <fullName>Fucosyltransferase 1</fullName>
    </alternativeName>
    <alternativeName>
        <fullName>GDP-L-fucose:beta-D-galactoside 2-alpha-L-fucosyltransferase 1</fullName>
    </alternativeName>
    <alternativeName>
        <fullName evidence="2">Type 1 galactoside alpha-(1,2)-fucosyltransferase FUT1</fullName>
        <ecNumber evidence="2">2.4.1.69</ecNumber>
    </alternativeName>
    <alternativeName>
        <fullName evidence="3">Type 2 galactoside alpha-(1,2)-fucosyltransferase FUT1</fullName>
        <ecNumber evidence="3">2.4.1.344</ecNumber>
    </alternativeName>
</protein>
<accession>Q866C5</accession>